<name>ISPF_NATTJ</name>
<proteinExistence type="inferred from homology"/>
<sequence length="158" mass="17337">MRIGHGVDVHKLVKGEDLVLGGVQIPSDLGLKGHSDADVLIHAIMDAMLGSLALGDIGKHFPDDDPRYHQIDSKVLLKKTYQLITSYGYQLINLDSTIMAEKPKLAPYIDEMRITISDVLDLYPSQIGIKATTFEKLGFVGSGQGIMAQAVVLMERLY</sequence>
<dbReference type="EC" id="4.6.1.12" evidence="1"/>
<dbReference type="EMBL" id="CP001034">
    <property type="protein sequence ID" value="ACB83766.1"/>
    <property type="molecule type" value="Genomic_DNA"/>
</dbReference>
<dbReference type="RefSeq" id="WP_012446657.1">
    <property type="nucleotide sequence ID" value="NC_010718.1"/>
</dbReference>
<dbReference type="SMR" id="B2A4B2"/>
<dbReference type="FunCoup" id="B2A4B2">
    <property type="interactions" value="358"/>
</dbReference>
<dbReference type="STRING" id="457570.Nther_0167"/>
<dbReference type="KEGG" id="nth:Nther_0167"/>
<dbReference type="eggNOG" id="COG0245">
    <property type="taxonomic scope" value="Bacteria"/>
</dbReference>
<dbReference type="HOGENOM" id="CLU_084630_2_0_9"/>
<dbReference type="InParanoid" id="B2A4B2"/>
<dbReference type="OrthoDB" id="9804336at2"/>
<dbReference type="UniPathway" id="UPA00056">
    <property type="reaction ID" value="UER00095"/>
</dbReference>
<dbReference type="Proteomes" id="UP000001683">
    <property type="component" value="Chromosome"/>
</dbReference>
<dbReference type="GO" id="GO:0008685">
    <property type="term" value="F:2-C-methyl-D-erythritol 2,4-cyclodiphosphate synthase activity"/>
    <property type="evidence" value="ECO:0007669"/>
    <property type="project" value="UniProtKB-UniRule"/>
</dbReference>
<dbReference type="GO" id="GO:0046872">
    <property type="term" value="F:metal ion binding"/>
    <property type="evidence" value="ECO:0007669"/>
    <property type="project" value="UniProtKB-KW"/>
</dbReference>
<dbReference type="GO" id="GO:0019288">
    <property type="term" value="P:isopentenyl diphosphate biosynthetic process, methylerythritol 4-phosphate pathway"/>
    <property type="evidence" value="ECO:0007669"/>
    <property type="project" value="UniProtKB-UniRule"/>
</dbReference>
<dbReference type="GO" id="GO:0016114">
    <property type="term" value="P:terpenoid biosynthetic process"/>
    <property type="evidence" value="ECO:0007669"/>
    <property type="project" value="InterPro"/>
</dbReference>
<dbReference type="CDD" id="cd00554">
    <property type="entry name" value="MECDP_synthase"/>
    <property type="match status" value="1"/>
</dbReference>
<dbReference type="FunFam" id="3.30.1330.50:FF:000001">
    <property type="entry name" value="2-C-methyl-D-erythritol 2,4-cyclodiphosphate synthase"/>
    <property type="match status" value="1"/>
</dbReference>
<dbReference type="Gene3D" id="3.30.1330.50">
    <property type="entry name" value="2-C-methyl-D-erythritol 2,4-cyclodiphosphate synthase"/>
    <property type="match status" value="1"/>
</dbReference>
<dbReference type="HAMAP" id="MF_00107">
    <property type="entry name" value="IspF"/>
    <property type="match status" value="1"/>
</dbReference>
<dbReference type="InterPro" id="IPR003526">
    <property type="entry name" value="MECDP_synthase"/>
</dbReference>
<dbReference type="InterPro" id="IPR020555">
    <property type="entry name" value="MECDP_synthase_CS"/>
</dbReference>
<dbReference type="InterPro" id="IPR036571">
    <property type="entry name" value="MECDP_synthase_sf"/>
</dbReference>
<dbReference type="NCBIfam" id="TIGR00151">
    <property type="entry name" value="ispF"/>
    <property type="match status" value="1"/>
</dbReference>
<dbReference type="PANTHER" id="PTHR43181">
    <property type="entry name" value="2-C-METHYL-D-ERYTHRITOL 2,4-CYCLODIPHOSPHATE SYNTHASE, CHLOROPLASTIC"/>
    <property type="match status" value="1"/>
</dbReference>
<dbReference type="PANTHER" id="PTHR43181:SF1">
    <property type="entry name" value="2-C-METHYL-D-ERYTHRITOL 2,4-CYCLODIPHOSPHATE SYNTHASE, CHLOROPLASTIC"/>
    <property type="match status" value="1"/>
</dbReference>
<dbReference type="Pfam" id="PF02542">
    <property type="entry name" value="YgbB"/>
    <property type="match status" value="1"/>
</dbReference>
<dbReference type="SUPFAM" id="SSF69765">
    <property type="entry name" value="IpsF-like"/>
    <property type="match status" value="1"/>
</dbReference>
<dbReference type="PROSITE" id="PS01350">
    <property type="entry name" value="ISPF"/>
    <property type="match status" value="1"/>
</dbReference>
<feature type="chain" id="PRO_1000094274" description="2-C-methyl-D-erythritol 2,4-cyclodiphosphate synthase">
    <location>
        <begin position="1"/>
        <end position="158"/>
    </location>
</feature>
<feature type="binding site" evidence="1">
    <location>
        <begin position="8"/>
        <end position="10"/>
    </location>
    <ligand>
        <name>4-CDP-2-C-methyl-D-erythritol 2-phosphate</name>
        <dbReference type="ChEBI" id="CHEBI:57919"/>
    </ligand>
</feature>
<feature type="binding site" evidence="1">
    <location>
        <position position="8"/>
    </location>
    <ligand>
        <name>a divalent metal cation</name>
        <dbReference type="ChEBI" id="CHEBI:60240"/>
    </ligand>
</feature>
<feature type="binding site" evidence="1">
    <location>
        <position position="10"/>
    </location>
    <ligand>
        <name>a divalent metal cation</name>
        <dbReference type="ChEBI" id="CHEBI:60240"/>
    </ligand>
</feature>
<feature type="binding site" evidence="1">
    <location>
        <begin position="34"/>
        <end position="35"/>
    </location>
    <ligand>
        <name>4-CDP-2-C-methyl-D-erythritol 2-phosphate</name>
        <dbReference type="ChEBI" id="CHEBI:57919"/>
    </ligand>
</feature>
<feature type="binding site" evidence="1">
    <location>
        <position position="42"/>
    </location>
    <ligand>
        <name>a divalent metal cation</name>
        <dbReference type="ChEBI" id="CHEBI:60240"/>
    </ligand>
</feature>
<feature type="binding site" evidence="1">
    <location>
        <begin position="56"/>
        <end position="58"/>
    </location>
    <ligand>
        <name>4-CDP-2-C-methyl-D-erythritol 2-phosphate</name>
        <dbReference type="ChEBI" id="CHEBI:57919"/>
    </ligand>
</feature>
<feature type="binding site" evidence="1">
    <location>
        <begin position="61"/>
        <end position="65"/>
    </location>
    <ligand>
        <name>4-CDP-2-C-methyl-D-erythritol 2-phosphate</name>
        <dbReference type="ChEBI" id="CHEBI:57919"/>
    </ligand>
</feature>
<feature type="binding site" evidence="1">
    <location>
        <begin position="132"/>
        <end position="135"/>
    </location>
    <ligand>
        <name>4-CDP-2-C-methyl-D-erythritol 2-phosphate</name>
        <dbReference type="ChEBI" id="CHEBI:57919"/>
    </ligand>
</feature>
<feature type="binding site" evidence="1">
    <location>
        <position position="139"/>
    </location>
    <ligand>
        <name>4-CDP-2-C-methyl-D-erythritol 2-phosphate</name>
        <dbReference type="ChEBI" id="CHEBI:57919"/>
    </ligand>
</feature>
<feature type="site" description="Transition state stabilizer" evidence="1">
    <location>
        <position position="34"/>
    </location>
</feature>
<feature type="site" description="Transition state stabilizer" evidence="1">
    <location>
        <position position="133"/>
    </location>
</feature>
<protein>
    <recommendedName>
        <fullName evidence="1">2-C-methyl-D-erythritol 2,4-cyclodiphosphate synthase</fullName>
        <shortName evidence="1">MECDP-synthase</shortName>
        <shortName evidence="1">MECPP-synthase</shortName>
        <shortName evidence="1">MECPS</shortName>
        <ecNumber evidence="1">4.6.1.12</ecNumber>
    </recommendedName>
</protein>
<gene>
    <name evidence="1" type="primary">ispF</name>
    <name type="ordered locus">Nther_0167</name>
</gene>
<evidence type="ECO:0000255" key="1">
    <source>
        <dbReference type="HAMAP-Rule" id="MF_00107"/>
    </source>
</evidence>
<reference key="1">
    <citation type="submission" date="2008-04" db="EMBL/GenBank/DDBJ databases">
        <title>Complete sequence of chromosome of Natranaerobius thermophilus JW/NM-WN-LF.</title>
        <authorList>
            <consortium name="US DOE Joint Genome Institute"/>
            <person name="Copeland A."/>
            <person name="Lucas S."/>
            <person name="Lapidus A."/>
            <person name="Glavina del Rio T."/>
            <person name="Dalin E."/>
            <person name="Tice H."/>
            <person name="Bruce D."/>
            <person name="Goodwin L."/>
            <person name="Pitluck S."/>
            <person name="Chertkov O."/>
            <person name="Brettin T."/>
            <person name="Detter J.C."/>
            <person name="Han C."/>
            <person name="Kuske C.R."/>
            <person name="Schmutz J."/>
            <person name="Larimer F."/>
            <person name="Land M."/>
            <person name="Hauser L."/>
            <person name="Kyrpides N."/>
            <person name="Lykidis A."/>
            <person name="Mesbah N.M."/>
            <person name="Wiegel J."/>
        </authorList>
    </citation>
    <scope>NUCLEOTIDE SEQUENCE [LARGE SCALE GENOMIC DNA]</scope>
    <source>
        <strain>ATCC BAA-1301 / DSM 18059 / JW/NM-WN-LF</strain>
    </source>
</reference>
<keyword id="KW-0414">Isoprene biosynthesis</keyword>
<keyword id="KW-0456">Lyase</keyword>
<keyword id="KW-0479">Metal-binding</keyword>
<keyword id="KW-1185">Reference proteome</keyword>
<comment type="function">
    <text evidence="1">Involved in the biosynthesis of isopentenyl diphosphate (IPP) and dimethylallyl diphosphate (DMAPP), two major building blocks of isoprenoid compounds. Catalyzes the conversion of 4-diphosphocytidyl-2-C-methyl-D-erythritol 2-phosphate (CDP-ME2P) to 2-C-methyl-D-erythritol 2,4-cyclodiphosphate (ME-CPP) with a corresponding release of cytidine 5-monophosphate (CMP).</text>
</comment>
<comment type="catalytic activity">
    <reaction evidence="1">
        <text>4-CDP-2-C-methyl-D-erythritol 2-phosphate = 2-C-methyl-D-erythritol 2,4-cyclic diphosphate + CMP</text>
        <dbReference type="Rhea" id="RHEA:23864"/>
        <dbReference type="ChEBI" id="CHEBI:57919"/>
        <dbReference type="ChEBI" id="CHEBI:58483"/>
        <dbReference type="ChEBI" id="CHEBI:60377"/>
        <dbReference type="EC" id="4.6.1.12"/>
    </reaction>
</comment>
<comment type="cofactor">
    <cofactor evidence="1">
        <name>a divalent metal cation</name>
        <dbReference type="ChEBI" id="CHEBI:60240"/>
    </cofactor>
    <text evidence="1">Binds 1 divalent metal cation per subunit.</text>
</comment>
<comment type="pathway">
    <text evidence="1">Isoprenoid biosynthesis; isopentenyl diphosphate biosynthesis via DXP pathway; isopentenyl diphosphate from 1-deoxy-D-xylulose 5-phosphate: step 4/6.</text>
</comment>
<comment type="subunit">
    <text evidence="1">Homotrimer.</text>
</comment>
<comment type="similarity">
    <text evidence="1">Belongs to the IspF family.</text>
</comment>
<organism>
    <name type="scientific">Natranaerobius thermophilus (strain ATCC BAA-1301 / DSM 18059 / JW/NM-WN-LF)</name>
    <dbReference type="NCBI Taxonomy" id="457570"/>
    <lineage>
        <taxon>Bacteria</taxon>
        <taxon>Bacillati</taxon>
        <taxon>Bacillota</taxon>
        <taxon>Clostridia</taxon>
        <taxon>Natranaerobiales</taxon>
        <taxon>Natranaerobiaceae</taxon>
        <taxon>Natranaerobius</taxon>
    </lineage>
</organism>
<accession>B2A4B2</accession>